<dbReference type="EMBL" id="AL162973">
    <property type="protein sequence ID" value="CAB86045.1"/>
    <property type="molecule type" value="Genomic_DNA"/>
</dbReference>
<dbReference type="EMBL" id="CP002688">
    <property type="protein sequence ID" value="AED90534.1"/>
    <property type="molecule type" value="Genomic_DNA"/>
</dbReference>
<dbReference type="EMBL" id="AY084393">
    <property type="protein sequence ID" value="AAM60970.1"/>
    <property type="molecule type" value="mRNA"/>
</dbReference>
<dbReference type="EMBL" id="BT029182">
    <property type="protein sequence ID" value="ABJ17117.1"/>
    <property type="molecule type" value="mRNA"/>
</dbReference>
<dbReference type="PIR" id="T48312">
    <property type="entry name" value="T48312"/>
</dbReference>
<dbReference type="RefSeq" id="NP_195911.1">
    <molecule id="Q9LYZ4-1"/>
    <property type="nucleotide sequence ID" value="NM_120369.3"/>
</dbReference>
<dbReference type="FunCoup" id="Q9LYZ4">
    <property type="interactions" value="1010"/>
</dbReference>
<dbReference type="PaxDb" id="3702-AT5G02910.1"/>
<dbReference type="EnsemblPlants" id="AT5G02910.1">
    <molecule id="Q9LYZ4-1"/>
    <property type="protein sequence ID" value="AT5G02910.1"/>
    <property type="gene ID" value="AT5G02910"/>
</dbReference>
<dbReference type="GeneID" id="831746"/>
<dbReference type="Gramene" id="AT5G02910.1">
    <molecule id="Q9LYZ4-1"/>
    <property type="protein sequence ID" value="AT5G02910.1"/>
    <property type="gene ID" value="AT5G02910"/>
</dbReference>
<dbReference type="KEGG" id="ath:AT5G02910"/>
<dbReference type="Araport" id="AT5G02910"/>
<dbReference type="TAIR" id="AT5G02910"/>
<dbReference type="InParanoid" id="Q9LYZ4"/>
<dbReference type="PhylomeDB" id="Q9LYZ4"/>
<dbReference type="PRO" id="PR:Q9LYZ4"/>
<dbReference type="Proteomes" id="UP000006548">
    <property type="component" value="Chromosome 5"/>
</dbReference>
<dbReference type="ExpressionAtlas" id="Q9LYZ4">
    <property type="expression patterns" value="baseline and differential"/>
</dbReference>
<dbReference type="CDD" id="cd22160">
    <property type="entry name" value="F-box_AtFBL13-like"/>
    <property type="match status" value="1"/>
</dbReference>
<dbReference type="Gene3D" id="1.20.1280.50">
    <property type="match status" value="1"/>
</dbReference>
<dbReference type="Gene3D" id="3.80.10.10">
    <property type="entry name" value="Ribonuclease Inhibitor"/>
    <property type="match status" value="1"/>
</dbReference>
<dbReference type="InterPro" id="IPR036047">
    <property type="entry name" value="F-box-like_dom_sf"/>
</dbReference>
<dbReference type="InterPro" id="IPR053781">
    <property type="entry name" value="F-box_AtFBL13-like"/>
</dbReference>
<dbReference type="InterPro" id="IPR001810">
    <property type="entry name" value="F-box_dom"/>
</dbReference>
<dbReference type="InterPro" id="IPR044997">
    <property type="entry name" value="F-box_plant"/>
</dbReference>
<dbReference type="InterPro" id="IPR055357">
    <property type="entry name" value="LRR_At1g61320_AtMIF1"/>
</dbReference>
<dbReference type="InterPro" id="IPR032675">
    <property type="entry name" value="LRR_dom_sf"/>
</dbReference>
<dbReference type="PANTHER" id="PTHR32153">
    <property type="entry name" value="OJ000223_09.16 PROTEIN"/>
    <property type="match status" value="1"/>
</dbReference>
<dbReference type="Pfam" id="PF00646">
    <property type="entry name" value="F-box"/>
    <property type="match status" value="1"/>
</dbReference>
<dbReference type="Pfam" id="PF23622">
    <property type="entry name" value="LRR_At1g61320_AtMIF1"/>
    <property type="match status" value="1"/>
</dbReference>
<dbReference type="SMART" id="SM00256">
    <property type="entry name" value="FBOX"/>
    <property type="match status" value="1"/>
</dbReference>
<dbReference type="SUPFAM" id="SSF81383">
    <property type="entry name" value="F-box domain"/>
    <property type="match status" value="1"/>
</dbReference>
<dbReference type="SUPFAM" id="SSF52047">
    <property type="entry name" value="RNI-like"/>
    <property type="match status" value="1"/>
</dbReference>
<dbReference type="PROSITE" id="PS50181">
    <property type="entry name" value="FBOX"/>
    <property type="match status" value="1"/>
</dbReference>
<protein>
    <recommendedName>
        <fullName>F-box/LRR-repeat protein At5g02910</fullName>
    </recommendedName>
</protein>
<name>FBL79_ARATH</name>
<proteinExistence type="evidence at transcript level"/>
<accession>Q9LYZ4</accession>
<accession>Q8LG97</accession>
<sequence length="458" mass="51846">MITGDSIDGMDFISSLPDEILHHILSSVPTKSAIRTSLLSKRWRYVWSETPSLSIDCRRADPNSIDKTLSFFSAPKITSFHLHTTLLNRIDSVNGCIEFAISHNAEKLSLESRDYRVRNYKFPDFFYTNSSVKQLFVDSGSVHLIPRCTVSWTSLKNLSLSNCTLSDESFLKILSGSPLLESLELLYCAEYMCLDLSQSQHLRRLEIDRSDWFMGPTKIVAPHLHCLRLRHSRLPCSLVDVSSLTEADLNIYFGDLKTVTAGFLQHNVVKMLQMLQNVEKLTIGGTFLQMLSLAALCGVPFPTLKVKTLTLETMIIRSVIPGITKLLRYTPGLRKLTIHTVKCSSISELHLNDYLRKHSLNQRQCWRSKDSVFPGSLETISMLASKHAESNLVALFMERLLKSTKSLETMVVLLVDYLDALGFEELLAMATTLSHNNDVSVLIKRSYIKYVSNTFPQR</sequence>
<reference key="1">
    <citation type="journal article" date="2000" name="Nature">
        <title>Sequence and analysis of chromosome 5 of the plant Arabidopsis thaliana.</title>
        <authorList>
            <person name="Tabata S."/>
            <person name="Kaneko T."/>
            <person name="Nakamura Y."/>
            <person name="Kotani H."/>
            <person name="Kato T."/>
            <person name="Asamizu E."/>
            <person name="Miyajima N."/>
            <person name="Sasamoto S."/>
            <person name="Kimura T."/>
            <person name="Hosouchi T."/>
            <person name="Kawashima K."/>
            <person name="Kohara M."/>
            <person name="Matsumoto M."/>
            <person name="Matsuno A."/>
            <person name="Muraki A."/>
            <person name="Nakayama S."/>
            <person name="Nakazaki N."/>
            <person name="Naruo K."/>
            <person name="Okumura S."/>
            <person name="Shinpo S."/>
            <person name="Takeuchi C."/>
            <person name="Wada T."/>
            <person name="Watanabe A."/>
            <person name="Yamada M."/>
            <person name="Yasuda M."/>
            <person name="Sato S."/>
            <person name="de la Bastide M."/>
            <person name="Huang E."/>
            <person name="Spiegel L."/>
            <person name="Gnoj L."/>
            <person name="O'Shaughnessy A."/>
            <person name="Preston R."/>
            <person name="Habermann K."/>
            <person name="Murray J."/>
            <person name="Johnson D."/>
            <person name="Rohlfing T."/>
            <person name="Nelson J."/>
            <person name="Stoneking T."/>
            <person name="Pepin K."/>
            <person name="Spieth J."/>
            <person name="Sekhon M."/>
            <person name="Armstrong J."/>
            <person name="Becker M."/>
            <person name="Belter E."/>
            <person name="Cordum H."/>
            <person name="Cordes M."/>
            <person name="Courtney L."/>
            <person name="Courtney W."/>
            <person name="Dante M."/>
            <person name="Du H."/>
            <person name="Edwards J."/>
            <person name="Fryman J."/>
            <person name="Haakensen B."/>
            <person name="Lamar E."/>
            <person name="Latreille P."/>
            <person name="Leonard S."/>
            <person name="Meyer R."/>
            <person name="Mulvaney E."/>
            <person name="Ozersky P."/>
            <person name="Riley A."/>
            <person name="Strowmatt C."/>
            <person name="Wagner-McPherson C."/>
            <person name="Wollam A."/>
            <person name="Yoakum M."/>
            <person name="Bell M."/>
            <person name="Dedhia N."/>
            <person name="Parnell L."/>
            <person name="Shah R."/>
            <person name="Rodriguez M."/>
            <person name="Hoon See L."/>
            <person name="Vil D."/>
            <person name="Baker J."/>
            <person name="Kirchoff K."/>
            <person name="Toth K."/>
            <person name="King L."/>
            <person name="Bahret A."/>
            <person name="Miller B."/>
            <person name="Marra M.A."/>
            <person name="Martienssen R."/>
            <person name="McCombie W.R."/>
            <person name="Wilson R.K."/>
            <person name="Murphy G."/>
            <person name="Bancroft I."/>
            <person name="Volckaert G."/>
            <person name="Wambutt R."/>
            <person name="Duesterhoeft A."/>
            <person name="Stiekema W."/>
            <person name="Pohl T."/>
            <person name="Entian K.-D."/>
            <person name="Terryn N."/>
            <person name="Hartley N."/>
            <person name="Bent E."/>
            <person name="Johnson S."/>
            <person name="Langham S.-A."/>
            <person name="McCullagh B."/>
            <person name="Robben J."/>
            <person name="Grymonprez B."/>
            <person name="Zimmermann W."/>
            <person name="Ramsperger U."/>
            <person name="Wedler H."/>
            <person name="Balke K."/>
            <person name="Wedler E."/>
            <person name="Peters S."/>
            <person name="van Staveren M."/>
            <person name="Dirkse W."/>
            <person name="Mooijman P."/>
            <person name="Klein Lankhorst R."/>
            <person name="Weitzenegger T."/>
            <person name="Bothe G."/>
            <person name="Rose M."/>
            <person name="Hauf J."/>
            <person name="Berneiser S."/>
            <person name="Hempel S."/>
            <person name="Feldpausch M."/>
            <person name="Lamberth S."/>
            <person name="Villarroel R."/>
            <person name="Gielen J."/>
            <person name="Ardiles W."/>
            <person name="Bents O."/>
            <person name="Lemcke K."/>
            <person name="Kolesov G."/>
            <person name="Mayer K.F.X."/>
            <person name="Rudd S."/>
            <person name="Schoof H."/>
            <person name="Schueller C."/>
            <person name="Zaccaria P."/>
            <person name="Mewes H.-W."/>
            <person name="Bevan M."/>
            <person name="Fransz P.F."/>
        </authorList>
    </citation>
    <scope>NUCLEOTIDE SEQUENCE [LARGE SCALE GENOMIC DNA]</scope>
    <source>
        <strain>cv. Columbia</strain>
    </source>
</reference>
<reference key="2">
    <citation type="journal article" date="2017" name="Plant J.">
        <title>Araport11: a complete reannotation of the Arabidopsis thaliana reference genome.</title>
        <authorList>
            <person name="Cheng C.Y."/>
            <person name="Krishnakumar V."/>
            <person name="Chan A.P."/>
            <person name="Thibaud-Nissen F."/>
            <person name="Schobel S."/>
            <person name="Town C.D."/>
        </authorList>
    </citation>
    <scope>GENOME REANNOTATION</scope>
    <source>
        <strain>cv. Columbia</strain>
    </source>
</reference>
<reference key="3">
    <citation type="submission" date="2002-03" db="EMBL/GenBank/DDBJ databases">
        <title>Full-length cDNA from Arabidopsis thaliana.</title>
        <authorList>
            <person name="Brover V.V."/>
            <person name="Troukhan M.E."/>
            <person name="Alexandrov N.A."/>
            <person name="Lu Y.-P."/>
            <person name="Flavell R.B."/>
            <person name="Feldmann K.A."/>
        </authorList>
    </citation>
    <scope>NUCLEOTIDE SEQUENCE [LARGE SCALE MRNA]</scope>
</reference>
<reference key="4">
    <citation type="submission" date="2006-10" db="EMBL/GenBank/DDBJ databases">
        <title>Arabidopsis ORF clone.</title>
        <authorList>
            <person name="Bautista V.R."/>
            <person name="Kim C.J."/>
            <person name="Chen H."/>
            <person name="Quinitio C."/>
            <person name="Ecker J.R."/>
        </authorList>
    </citation>
    <scope>NUCLEOTIDE SEQUENCE [LARGE SCALE MRNA]</scope>
    <source>
        <strain>cv. Columbia</strain>
    </source>
</reference>
<organism>
    <name type="scientific">Arabidopsis thaliana</name>
    <name type="common">Mouse-ear cress</name>
    <dbReference type="NCBI Taxonomy" id="3702"/>
    <lineage>
        <taxon>Eukaryota</taxon>
        <taxon>Viridiplantae</taxon>
        <taxon>Streptophyta</taxon>
        <taxon>Embryophyta</taxon>
        <taxon>Tracheophyta</taxon>
        <taxon>Spermatophyta</taxon>
        <taxon>Magnoliopsida</taxon>
        <taxon>eudicotyledons</taxon>
        <taxon>Gunneridae</taxon>
        <taxon>Pentapetalae</taxon>
        <taxon>rosids</taxon>
        <taxon>malvids</taxon>
        <taxon>Brassicales</taxon>
        <taxon>Brassicaceae</taxon>
        <taxon>Camelineae</taxon>
        <taxon>Arabidopsis</taxon>
    </lineage>
</organism>
<evidence type="ECO:0000255" key="1">
    <source>
        <dbReference type="PROSITE-ProRule" id="PRU00080"/>
    </source>
</evidence>
<evidence type="ECO:0000305" key="2"/>
<comment type="alternative products">
    <event type="alternative splicing"/>
    <isoform>
        <id>Q9LYZ4-1</id>
        <name>1</name>
        <sequence type="displayed"/>
    </isoform>
    <text>A number of isoforms are produced. According to EST sequences.</text>
</comment>
<keyword id="KW-0025">Alternative splicing</keyword>
<keyword id="KW-0433">Leucine-rich repeat</keyword>
<keyword id="KW-1185">Reference proteome</keyword>
<keyword id="KW-0677">Repeat</keyword>
<feature type="chain" id="PRO_0000281976" description="F-box/LRR-repeat protein At5g02910">
    <location>
        <begin position="1"/>
        <end position="458"/>
    </location>
</feature>
<feature type="domain" description="F-box" evidence="1">
    <location>
        <begin position="10"/>
        <end position="56"/>
    </location>
</feature>
<feature type="repeat" description="LRR 1">
    <location>
        <begin position="57"/>
        <end position="84"/>
    </location>
</feature>
<feature type="repeat" description="LRR 2">
    <location>
        <begin position="86"/>
        <end position="112"/>
    </location>
</feature>
<feature type="repeat" description="LRR 3">
    <location>
        <begin position="133"/>
        <end position="161"/>
    </location>
</feature>
<feature type="repeat" description="LRR 4">
    <location>
        <begin position="162"/>
        <end position="187"/>
    </location>
</feature>
<feature type="repeat" description="LRR 5">
    <location>
        <begin position="226"/>
        <end position="251"/>
    </location>
</feature>
<feature type="repeat" description="LRR 6">
    <location>
        <begin position="260"/>
        <end position="285"/>
    </location>
</feature>
<feature type="repeat" description="LRR 7">
    <location>
        <begin position="325"/>
        <end position="353"/>
    </location>
</feature>
<feature type="repeat" description="LRR 8">
    <location>
        <begin position="389"/>
        <end position="414"/>
    </location>
</feature>
<feature type="sequence conflict" description="In Ref. 3; AAM60970." evidence="2" ref="3">
    <original>D</original>
    <variation>G</variation>
    <location>
        <position position="248"/>
    </location>
</feature>
<feature type="sequence conflict" description="In Ref. 3; AAM60970." evidence="2" ref="3">
    <original>R</original>
    <variation>L</variation>
    <location>
        <position position="458"/>
    </location>
</feature>
<gene>
    <name type="ordered locus">At5g02910</name>
    <name type="ORF">F9G14.220</name>
</gene>